<gene>
    <name evidence="31" type="primary">PLCE1</name>
    <name type="synonym">KIAA1516</name>
    <name type="synonym">PLCE</name>
    <name type="synonym">PPLC</name>
</gene>
<organism>
    <name type="scientific">Homo sapiens</name>
    <name type="common">Human</name>
    <dbReference type="NCBI Taxonomy" id="9606"/>
    <lineage>
        <taxon>Eukaryota</taxon>
        <taxon>Metazoa</taxon>
        <taxon>Chordata</taxon>
        <taxon>Craniata</taxon>
        <taxon>Vertebrata</taxon>
        <taxon>Euteleostomi</taxon>
        <taxon>Mammalia</taxon>
        <taxon>Eutheria</taxon>
        <taxon>Euarchontoglires</taxon>
        <taxon>Primates</taxon>
        <taxon>Haplorrhini</taxon>
        <taxon>Catarrhini</taxon>
        <taxon>Hominidae</taxon>
        <taxon>Homo</taxon>
    </lineage>
</organism>
<feature type="chain" id="PRO_0000256238" description="1-phosphatidylinositol 4,5-bisphosphate phosphodiesterase epsilon-1">
    <location>
        <begin position="1"/>
        <end position="2302"/>
    </location>
</feature>
<feature type="domain" description="Ras-GEF" evidence="6">
    <location>
        <begin position="531"/>
        <end position="790"/>
    </location>
</feature>
<feature type="domain" description="PI-PLC X-box" evidence="7">
    <location>
        <begin position="1392"/>
        <end position="1540"/>
    </location>
</feature>
<feature type="domain" description="PI-PLC Y-box" evidence="8">
    <location>
        <begin position="1730"/>
        <end position="1846"/>
    </location>
</feature>
<feature type="domain" description="C2" evidence="4">
    <location>
        <begin position="1851"/>
        <end position="1976"/>
    </location>
</feature>
<feature type="domain" description="Ras-associating 1" evidence="5">
    <location>
        <begin position="2012"/>
        <end position="2114"/>
    </location>
</feature>
<feature type="domain" description="Ras-associating 2" evidence="5">
    <location>
        <begin position="2135"/>
        <end position="2238"/>
    </location>
</feature>
<feature type="region of interest" description="Disordered" evidence="9">
    <location>
        <begin position="1053"/>
        <end position="1192"/>
    </location>
</feature>
<feature type="region of interest" description="Disordered" evidence="9">
    <location>
        <begin position="1567"/>
        <end position="1591"/>
    </location>
</feature>
<feature type="region of interest" description="Disordered" evidence="9">
    <location>
        <begin position="1683"/>
        <end position="1743"/>
    </location>
</feature>
<feature type="region of interest" description="Required for activation by RHOA, RHOB, GNA12, GNA13 and G-beta gamma" evidence="1">
    <location>
        <begin position="1686"/>
        <end position="1764"/>
    </location>
</feature>
<feature type="region of interest" description="Disordered" evidence="9">
    <location>
        <begin position="2260"/>
        <end position="2302"/>
    </location>
</feature>
<feature type="compositionally biased region" description="Polar residues" evidence="9">
    <location>
        <begin position="1057"/>
        <end position="1066"/>
    </location>
</feature>
<feature type="compositionally biased region" description="Polar residues" evidence="9">
    <location>
        <begin position="1073"/>
        <end position="1083"/>
    </location>
</feature>
<feature type="compositionally biased region" description="Low complexity" evidence="9">
    <location>
        <begin position="1165"/>
        <end position="1191"/>
    </location>
</feature>
<feature type="compositionally biased region" description="Low complexity" evidence="9">
    <location>
        <begin position="1568"/>
        <end position="1577"/>
    </location>
</feature>
<feature type="compositionally biased region" description="Acidic residues" evidence="9">
    <location>
        <begin position="1579"/>
        <end position="1591"/>
    </location>
</feature>
<feature type="compositionally biased region" description="Polar residues" evidence="9">
    <location>
        <begin position="1712"/>
        <end position="1723"/>
    </location>
</feature>
<feature type="compositionally biased region" description="Low complexity" evidence="9">
    <location>
        <begin position="1733"/>
        <end position="1743"/>
    </location>
</feature>
<feature type="compositionally biased region" description="Polar residues" evidence="9">
    <location>
        <begin position="2262"/>
        <end position="2281"/>
    </location>
</feature>
<feature type="compositionally biased region" description="Polar residues" evidence="9">
    <location>
        <begin position="2292"/>
        <end position="2302"/>
    </location>
</feature>
<feature type="active site" evidence="7">
    <location>
        <position position="1407"/>
    </location>
</feature>
<feature type="active site" evidence="7">
    <location>
        <position position="1452"/>
    </location>
</feature>
<feature type="modified residue" description="Phosphoserine" evidence="2">
    <location>
        <position position="1096"/>
    </location>
</feature>
<feature type="splice variant" id="VSP_021335" description="In isoform 2." evidence="28 29">
    <location>
        <begin position="1"/>
        <end position="308"/>
    </location>
</feature>
<feature type="splice variant" id="VSP_021336" description="In isoform 2." evidence="28 29">
    <original>DVEEDAFKSKKERSTLLVRRFCKNDREVKKSVYTGTRAIVRTLPSGHIGLTAWSYIDQKRNGPLLPCGRVMEPPSTVEIRQDGSQRLSEAQWYP</original>
    <variation>MVSEGSAAGRDFAGMEEVRQLHVRFCKGIKIWHQAWFLCSLLGREPQEREAGCQLWLCTLSAVLKVGWLFPLSEVPNFTLLKDGCGCWRLKEDQ</variation>
    <location>
        <begin position="309"/>
        <end position="402"/>
    </location>
</feature>
<feature type="sequence variant" id="VAR_031843" description="In dbSNP:rs17508082.">
    <original>S</original>
    <variation>T</variation>
    <location>
        <position position="469"/>
    </location>
</feature>
<feature type="sequence variant" id="VAR_031844" description="In dbSNP:rs17417407.">
    <original>R</original>
    <variation>L</variation>
    <location>
        <position position="548"/>
    </location>
</feature>
<feature type="sequence variant" id="VAR_087600" description="In NPHS3." evidence="25">
    <location>
        <begin position="1020"/>
        <end position="2302"/>
    </location>
</feature>
<feature type="sequence variant" id="VAR_029883" description="In NPHS3; gives rise to focal segmental glomerulosclerosis rather than diffuse mesangial sclerosis; dbSNP:rs121912605." evidence="24">
    <original>S</original>
    <variation>L</variation>
    <location>
        <position position="1484"/>
    </location>
</feature>
<feature type="sequence variant" id="VAR_031845" description="In dbSNP:rs2274224.">
    <original>R</original>
    <variation>P</variation>
    <location>
        <position position="1575"/>
    </location>
</feature>
<feature type="sequence variant" id="VAR_031846" description="In dbSNP:rs3765524." evidence="12 27">
    <original>T</original>
    <variation>I</variation>
    <location>
        <position position="1777"/>
    </location>
</feature>
<feature type="sequence variant" id="VAR_031847" description="In dbSNP:rs2274223." evidence="10 12 19 27">
    <original>H</original>
    <variation>R</variation>
    <location>
        <position position="1927"/>
    </location>
</feature>
<feature type="sequence variant" id="VAR_087601" description="In dbSNP:rs111929795." evidence="25">
    <original>K</original>
    <variation>R</variation>
    <location>
        <position position="2173"/>
    </location>
</feature>
<feature type="mutagenesis site" description="Loss of the phospholipase C enzymatic activity. Still activates HRAS and the MAP kinase pathway." evidence="11">
    <original>H</original>
    <variation>L</variation>
    <location>
        <position position="1452"/>
    </location>
</feature>
<feature type="mutagenesis site" description="Increases 2.8-fold the affinity for HRAS." evidence="22">
    <original>Q</original>
    <variation>E</variation>
    <location>
        <position position="2140"/>
    </location>
</feature>
<feature type="mutagenesis site" description="Decreases 17.5-fold the affinity for HRAS." evidence="22">
    <original>Q</original>
    <variation>E</variation>
    <location>
        <position position="2148"/>
    </location>
</feature>
<feature type="mutagenesis site" description="Increases 1.4-fold the affinity for HRAS." evidence="22">
    <original>Q</original>
    <variation>K</variation>
    <location>
        <position position="2148"/>
    </location>
</feature>
<feature type="mutagenesis site" description="Abolishes interaction with HRAS." evidence="22">
    <original>R</original>
    <variation>L</variation>
    <location>
        <position position="2150"/>
    </location>
</feature>
<feature type="mutagenesis site" description="No effect on HRAS-binding." evidence="22">
    <original>K</original>
    <variation>L</variation>
    <location>
        <position position="2171"/>
    </location>
</feature>
<feature type="mutagenesis site" description="Reduces HRAS-binding." evidence="22">
    <original>Y</original>
    <variation>L</variation>
    <location>
        <position position="2174"/>
    </location>
</feature>
<feature type="sequence conflict" description="In Ref. 2; AAG28341." evidence="30" ref="2">
    <original>G</original>
    <variation>S</variation>
    <location>
        <position position="502"/>
    </location>
</feature>
<feature type="sequence conflict" description="In Ref. 2; AAG28341." evidence="30" ref="2">
    <original>V</original>
    <variation>F</variation>
    <location>
        <position position="703"/>
    </location>
</feature>
<feature type="sequence conflict" description="In Ref. 2; AAG28341." evidence="30" ref="2">
    <original>E</original>
    <variation>K</variation>
    <location>
        <position position="1133"/>
    </location>
</feature>
<feature type="sequence conflict" description="In Ref. 8; AAF22005." evidence="30" ref="8">
    <original>SR</original>
    <variation>QA</variation>
    <location>
        <begin position="1229"/>
        <end position="1230"/>
    </location>
</feature>
<feature type="sequence conflict" description="In Ref. 1; AAG17145." evidence="30" ref="1">
    <original>L</original>
    <variation>P</variation>
    <location>
        <position position="1456"/>
    </location>
</feature>
<feature type="sequence conflict" description="In Ref. 9; BAB14090." evidence="30" ref="9">
    <original>N</original>
    <variation>D</variation>
    <location>
        <position position="1571"/>
    </location>
</feature>
<feature type="sequence conflict" description="In Ref. 2; AAG28341." evidence="30" ref="2">
    <original>R</original>
    <variation>Q</variation>
    <location>
        <position position="1575"/>
    </location>
</feature>
<feature type="sequence conflict" description="In Ref. 1; AAG17145." evidence="30" ref="1">
    <original>C</original>
    <variation>R</variation>
    <location>
        <position position="1672"/>
    </location>
</feature>
<feature type="sequence conflict" description="In Ref. 9; BAB14090." evidence="30" ref="9">
    <original>P</original>
    <variation>L</variation>
    <location>
        <position position="1705"/>
    </location>
</feature>
<feature type="sequence conflict" description="In Ref. 9; BAB14090." evidence="30" ref="9">
    <original>D</original>
    <variation>G</variation>
    <location>
        <position position="2125"/>
    </location>
</feature>
<feature type="strand" evidence="32">
    <location>
        <begin position="2015"/>
        <end position="2020"/>
    </location>
</feature>
<feature type="strand" evidence="32">
    <location>
        <begin position="2022"/>
        <end position="2031"/>
    </location>
</feature>
<feature type="helix" evidence="32">
    <location>
        <begin position="2038"/>
        <end position="2046"/>
    </location>
</feature>
<feature type="strand" evidence="32">
    <location>
        <begin position="2049"/>
        <end position="2052"/>
    </location>
</feature>
<feature type="strand" evidence="32">
    <location>
        <begin position="2058"/>
        <end position="2064"/>
    </location>
</feature>
<feature type="strand" evidence="32">
    <location>
        <begin position="2069"/>
        <end position="2072"/>
    </location>
</feature>
<feature type="strand" evidence="32">
    <location>
        <begin position="2081"/>
        <end position="2084"/>
    </location>
</feature>
<feature type="strand" evidence="32">
    <location>
        <begin position="2086"/>
        <end position="2088"/>
    </location>
</feature>
<feature type="helix" evidence="32">
    <location>
        <begin position="2090"/>
        <end position="2096"/>
    </location>
</feature>
<feature type="turn" evidence="32">
    <location>
        <begin position="2099"/>
        <end position="2103"/>
    </location>
</feature>
<feature type="strand" evidence="32">
    <location>
        <begin position="2107"/>
        <end position="2112"/>
    </location>
</feature>
<feature type="strand" evidence="34">
    <location>
        <begin position="2136"/>
        <end position="2143"/>
    </location>
</feature>
<feature type="strand" evidence="34">
    <location>
        <begin position="2150"/>
        <end position="2156"/>
    </location>
</feature>
<feature type="helix" evidence="34">
    <location>
        <begin position="2161"/>
        <end position="2171"/>
    </location>
</feature>
<feature type="turn" evidence="34">
    <location>
        <begin position="2172"/>
        <end position="2174"/>
    </location>
</feature>
<feature type="helix" evidence="34">
    <location>
        <begin position="2176"/>
        <end position="2180"/>
    </location>
</feature>
<feature type="helix" evidence="34">
    <location>
        <begin position="2184"/>
        <end position="2186"/>
    </location>
</feature>
<feature type="strand" evidence="34">
    <location>
        <begin position="2187"/>
        <end position="2194"/>
    </location>
</feature>
<feature type="strand" evidence="33">
    <location>
        <begin position="2198"/>
        <end position="2204"/>
    </location>
</feature>
<feature type="strand" evidence="34">
    <location>
        <begin position="2207"/>
        <end position="2211"/>
    </location>
</feature>
<feature type="helix" evidence="34">
    <location>
        <begin position="2218"/>
        <end position="2223"/>
    </location>
</feature>
<feature type="strand" evidence="34">
    <location>
        <begin position="2229"/>
        <end position="2235"/>
    </location>
</feature>
<feature type="turn" evidence="34">
    <location>
        <begin position="2236"/>
        <end position="2238"/>
    </location>
</feature>
<feature type="sequence conflict" description="In Ref. 2; AAG28341." evidence="30" ref="2">
    <original>L</original>
    <variation>P</variation>
    <location sequence="Q9P212-2">
        <position position="69"/>
    </location>
</feature>
<accession>Q9P212</accession>
<accession>A6NGW0</accession>
<accession>A6NLA1</accession>
<accession>A7MBN7</accession>
<accession>A8K1D7</accession>
<accession>B9EIJ6</accession>
<accession>Q1X6H8</accession>
<accession>Q5VWL4</accession>
<accession>Q5VWL5</accession>
<accession>Q9H9X8</accession>
<accession>Q9HBX6</accession>
<accession>Q9HC53</accession>
<accession>Q9UHV3</accession>
<sequence>MTSEEMTASVLIPVTQRKVVSAQSAADESSEKVSDINISKAHTVRRSGETSHTISQLNKLKEEPSGSNLPKILSIAREKIVSDENSNEKCWEKIMPDSAKNLNINCNNILRNHQHGLPQRQFYEMYNSVAEEDLCLETGIPSPLERKVFPGIQLELDRPSMGISPLGNQSVIIETGRAHPDSRRAVFHFHYEVDRRMSDTFCTLSENLILDDCGNCVPLPGGEEKQKKNYVAYTCKLMELAKNCDNKNEQLQCDHCDTLNDKYFCFEGSCEKVDMVYSGDSFCRKDFTDSQAAKTFLSHFEDFPDNCDDVEEDAFKSKKERSTLLVRRFCKNDREVKKSVYTGTRAIVRTLPSGHIGLTAWSYIDQKRNGPLLPCGRVMEPPSTVEIRQDGSQRLSEAQWYPIYNAVRREETENTVGSLLHFLTKLPASETAHGRISVGPCLKQCVRDTVCEYRATLQRTSISQYITGSLLEATTSLGARSGLLSTFGGSTGRMMLKERQPGPSVANSNALPSSSAGISKELIDLQPLIQFPEEVASILMEQEQTIYRRVLPVDYLCFLTRDLGTPECQSSLPCLKASISASILTTQNGEHNALEDLVMRFNEVSSWVTWLILTAGSMEEKREVFSYLVHVAKCCWNMGNYNAVMEFLAGLRSRKVLKMWQFMDQSDIETMRSLKDAMAQHESSCEYRKVVTRALHIPGCKVVPFCGVFLKELCEVLDGASGLMKLCPRYNSQEETLEFVADYSGQDNFLQRVGQNGLKNSEKESTVNSIFQVIRSCNRSLETDEEDSPSEGNSSRKSSLKDKSRWQFIIGDLLDSDNDIFEQSKEYDSHGSEDSQKAFDHGTELIPWYVLSIQADVHQFLLQGATVIHYDQDTHLSARCFLQLQPDNSTLTWVKPTTASPASSKAKLGVLNNTAEPGKFPLLGNAGLSSLTEGVLDLFAVKAVYMGHPGIDIHTVCVQNKLGSMFLSETGVTLLYGLQTTDNRLLHFVAPKHTAKMLFSGLLELTRAVRKMRKFPDQRQQWLRKQYVSLYQEDGRYEGPTLAHAVELFGGRRWSARNPSPGTSAKNAEKPNMQRNNTLGISTTKKKKKILMRGESGEVTDDEMATRKAKMHKECRSRSGSDPQDINEQEESEVNAIANPPNPLPSRRAHSLTTAGSPNLAAGTSSPIRPVSSPVLSSSNKSPSSAWSSSSWHGRIKGGMKGFQSFMVSDSNMSFVEFVELFKSFSVRSRKDLKDLFDVYAVPCNRSGSESAPLYTNLTIDENTSDLQPDLDLLTRNVSDLGLFIKSKQQLSDNQRQISDAIAAASIVTNGTGIESTSLGIFGVGILQLNDFLVNCQGEHCTYDEILSIIQKFEPSISMCHQGLMSFEGFARFLMDKENFASKNDESQENIKELQLPLSYYYIESSHNTYLTGHQLKGESSVELYSQVLLQGCRSVELDCWDGDDGMPIIYHGHTLTTKIPFKEVVEAIDRSAFINSDLPIIISIENHCSLPQQRKMAEIFKTVFGEKLVTKFLFETDFSDDPMLPSPDQLRKKVLLKNKKLKAHQTPVDILKQKAHQLASMQVQAYNGGNANPRPANNEEEEDEEDEYDYDYESLSDDNILEDRPENKSCNDKLQFEYNEEIPKRIKKADNSACNKGKVYDMELGEEFYLDQNKKESRQIAPELSDLVIYCQAVKFPGLSTLNASGSSRGKERKSRKSIFGNNPGRMSPGETASFNKTSGKSSCEGIRQTWEESSSPLNPTTSLSAIIRTPKCYHISSLNENAAKRLCRRYSQKLTQHTACQLLRTYPAATRIDSSNPNPLMFWLHGIQLVALNYQTDDLPLHLNAAMFEANGGCGYVLKPPVLWDKNCPMYQKFSPLERDLDSMDPAVYSLTIVSGQNVCPSNSMGSPCIEVDVLGMPLDSCHFRTKPIHRNTLNPMWNEQFLFHVHFEDLVFLRFAVVENNSSAVTAQRIIPLKALKRGYRHLQLRNLHNEVLEISSLFINSRRMEENSSGNTMSASSMFNTEERKCLQTHRVTVHGVPGPEPFTVFTINGGTKAKQLLQQILTNEQDIKPVTTDYFLMEEKYFISKEKNECRKQPFQRAIGPEEEIMQILSSWFPEEGYMGRIVLKTQQENLEEKNIVQDDKEVILSSEEESFFVQVHDVSPEQPRTVIKAPRVSTAQDVIQQTLCKAKYSYSILSNPNPSDYVLLEEVVKDTTNKKTTTPKSSQRVLLDQECVFQAQSKWKGAGKFILKLKEQVQASREDKKKGISFASELKKLTKSTKQPRGLTSPSQLLTSESIQTKEEKPVGGLSSSDTMDYRQ</sequence>
<dbReference type="EC" id="3.1.4.11" evidence="11 12"/>
<dbReference type="EMBL" id="AF190642">
    <property type="protein sequence ID" value="AAG17145.2"/>
    <property type="status" value="ALT_FRAME"/>
    <property type="molecule type" value="mRNA"/>
</dbReference>
<dbReference type="EMBL" id="AF170071">
    <property type="protein sequence ID" value="AAG28341.1"/>
    <property type="molecule type" value="mRNA"/>
</dbReference>
<dbReference type="EMBL" id="AB040949">
    <property type="protein sequence ID" value="BAA96040.2"/>
    <property type="status" value="ALT_INIT"/>
    <property type="molecule type" value="mRNA"/>
</dbReference>
<dbReference type="EMBL" id="AL139118">
    <property type="status" value="NOT_ANNOTATED_CDS"/>
    <property type="molecule type" value="Genomic_DNA"/>
</dbReference>
<dbReference type="EMBL" id="AL139124">
    <property type="status" value="NOT_ANNOTATED_CDS"/>
    <property type="molecule type" value="Genomic_DNA"/>
</dbReference>
<dbReference type="EMBL" id="AL365510">
    <property type="status" value="NOT_ANNOTATED_CDS"/>
    <property type="molecule type" value="Genomic_DNA"/>
</dbReference>
<dbReference type="EMBL" id="AL389885">
    <property type="status" value="NOT_ANNOTATED_CDS"/>
    <property type="molecule type" value="Genomic_DNA"/>
</dbReference>
<dbReference type="EMBL" id="CH471066">
    <property type="protein sequence ID" value="EAW50042.1"/>
    <property type="molecule type" value="Genomic_DNA"/>
</dbReference>
<dbReference type="EMBL" id="CH471066">
    <property type="protein sequence ID" value="EAW50043.1"/>
    <property type="molecule type" value="Genomic_DNA"/>
</dbReference>
<dbReference type="EMBL" id="BC140705">
    <property type="protein sequence ID" value="AAI40706.1"/>
    <property type="molecule type" value="mRNA"/>
</dbReference>
<dbReference type="EMBL" id="BC151854">
    <property type="protein sequence ID" value="AAI51855.1"/>
    <property type="molecule type" value="mRNA"/>
</dbReference>
<dbReference type="EMBL" id="AF117948">
    <property type="protein sequence ID" value="AAF22005.1"/>
    <property type="status" value="ALT_FRAME"/>
    <property type="molecule type" value="mRNA"/>
</dbReference>
<dbReference type="EMBL" id="AK022543">
    <property type="protein sequence ID" value="BAB14090.1"/>
    <property type="status" value="ALT_INIT"/>
    <property type="molecule type" value="mRNA"/>
</dbReference>
<dbReference type="EMBL" id="AK289852">
    <property type="protein sequence ID" value="BAF82541.1"/>
    <property type="molecule type" value="mRNA"/>
</dbReference>
<dbReference type="EMBL" id="AY995135">
    <property type="protein sequence ID" value="AAY45890.1"/>
    <property type="molecule type" value="mRNA"/>
</dbReference>
<dbReference type="CCDS" id="CCDS41552.1">
    <molecule id="Q9P212-1"/>
</dbReference>
<dbReference type="CCDS" id="CCDS53555.1">
    <molecule id="Q9P212-2"/>
</dbReference>
<dbReference type="RefSeq" id="NP_001159451.1">
    <molecule id="Q9P212-2"/>
    <property type="nucleotide sequence ID" value="NM_001165979.2"/>
</dbReference>
<dbReference type="RefSeq" id="NP_001275918.1">
    <property type="nucleotide sequence ID" value="NM_001288989.1"/>
</dbReference>
<dbReference type="RefSeq" id="NP_057425.3">
    <molecule id="Q9P212-1"/>
    <property type="nucleotide sequence ID" value="NM_016341.3"/>
</dbReference>
<dbReference type="RefSeq" id="XP_047281245.1">
    <molecule id="Q9P212-1"/>
    <property type="nucleotide sequence ID" value="XM_047425289.1"/>
</dbReference>
<dbReference type="RefSeq" id="XP_047281246.1">
    <molecule id="Q9P212-1"/>
    <property type="nucleotide sequence ID" value="XM_047425290.1"/>
</dbReference>
<dbReference type="RefSeq" id="XP_047281247.1">
    <molecule id="Q9P212-1"/>
    <property type="nucleotide sequence ID" value="XM_047425291.1"/>
</dbReference>
<dbReference type="RefSeq" id="XP_047281248.1">
    <molecule id="Q9P212-1"/>
    <property type="nucleotide sequence ID" value="XM_047425292.1"/>
</dbReference>
<dbReference type="RefSeq" id="XP_047281249.1">
    <molecule id="Q9P212-1"/>
    <property type="nucleotide sequence ID" value="XM_047425293.1"/>
</dbReference>
<dbReference type="RefSeq" id="XP_047281250.1">
    <molecule id="Q9P212-1"/>
    <property type="nucleotide sequence ID" value="XM_047425294.1"/>
</dbReference>
<dbReference type="RefSeq" id="XP_047281257.1">
    <molecule id="Q9P212-2"/>
    <property type="nucleotide sequence ID" value="XM_047425301.1"/>
</dbReference>
<dbReference type="RefSeq" id="XP_054221987.1">
    <molecule id="Q9P212-1"/>
    <property type="nucleotide sequence ID" value="XM_054366012.1"/>
</dbReference>
<dbReference type="RefSeq" id="XP_054221988.1">
    <molecule id="Q9P212-1"/>
    <property type="nucleotide sequence ID" value="XM_054366013.1"/>
</dbReference>
<dbReference type="RefSeq" id="XP_054221989.1">
    <molecule id="Q9P212-1"/>
    <property type="nucleotide sequence ID" value="XM_054366014.1"/>
</dbReference>
<dbReference type="RefSeq" id="XP_054221990.1">
    <molecule id="Q9P212-1"/>
    <property type="nucleotide sequence ID" value="XM_054366015.1"/>
</dbReference>
<dbReference type="RefSeq" id="XP_054221991.1">
    <molecule id="Q9P212-1"/>
    <property type="nucleotide sequence ID" value="XM_054366016.1"/>
</dbReference>
<dbReference type="RefSeq" id="XP_054221992.1">
    <molecule id="Q9P212-1"/>
    <property type="nucleotide sequence ID" value="XM_054366017.1"/>
</dbReference>
<dbReference type="RefSeq" id="XP_054222000.1">
    <molecule id="Q9P212-2"/>
    <property type="nucleotide sequence ID" value="XM_054366025.1"/>
</dbReference>
<dbReference type="PDB" id="2BYE">
    <property type="method" value="NMR"/>
    <property type="chains" value="A=2006-2114"/>
</dbReference>
<dbReference type="PDB" id="2BYF">
    <property type="method" value="NMR"/>
    <property type="chains" value="A=2131-2246"/>
</dbReference>
<dbReference type="PDB" id="2C5L">
    <property type="method" value="X-ray"/>
    <property type="resolution" value="1.90 A"/>
    <property type="chains" value="C/D=2131-2246"/>
</dbReference>
<dbReference type="PDBsum" id="2BYE"/>
<dbReference type="PDBsum" id="2BYF"/>
<dbReference type="PDBsum" id="2C5L"/>
<dbReference type="BMRB" id="Q9P212"/>
<dbReference type="SMR" id="Q9P212"/>
<dbReference type="BioGRID" id="119370">
    <property type="interactions" value="17"/>
</dbReference>
<dbReference type="FunCoup" id="Q9P212">
    <property type="interactions" value="928"/>
</dbReference>
<dbReference type="IntAct" id="Q9P212">
    <property type="interactions" value="8"/>
</dbReference>
<dbReference type="STRING" id="9606.ENSP00000360431"/>
<dbReference type="SwissLipids" id="SLP:000000663"/>
<dbReference type="GlyCosmos" id="Q9P212">
    <property type="glycosylation" value="1 site, 1 glycan"/>
</dbReference>
<dbReference type="GlyGen" id="Q9P212">
    <property type="glycosylation" value="4 sites, 1 O-linked glycan (3 sites)"/>
</dbReference>
<dbReference type="iPTMnet" id="Q9P212"/>
<dbReference type="PhosphoSitePlus" id="Q9P212"/>
<dbReference type="BioMuta" id="PLCE1"/>
<dbReference type="DMDM" id="118595723"/>
<dbReference type="jPOST" id="Q9P212"/>
<dbReference type="MassIVE" id="Q9P212"/>
<dbReference type="PaxDb" id="9606-ENSP00000360431"/>
<dbReference type="PeptideAtlas" id="Q9P212"/>
<dbReference type="ProteomicsDB" id="83705">
    <molecule id="Q9P212-1"/>
</dbReference>
<dbReference type="ProteomicsDB" id="83706">
    <molecule id="Q9P212-2"/>
</dbReference>
<dbReference type="Antibodypedia" id="2889">
    <property type="antibodies" value="47 antibodies from 14 providers"/>
</dbReference>
<dbReference type="DNASU" id="51196"/>
<dbReference type="Ensembl" id="ENST00000371375.2">
    <molecule id="Q9P212-2"/>
    <property type="protein sequence ID" value="ENSP00000360426.1"/>
    <property type="gene ID" value="ENSG00000138193.17"/>
</dbReference>
<dbReference type="Ensembl" id="ENST00000371380.8">
    <molecule id="Q9P212-1"/>
    <property type="protein sequence ID" value="ENSP00000360431.2"/>
    <property type="gene ID" value="ENSG00000138193.17"/>
</dbReference>
<dbReference type="Ensembl" id="ENST00000675218.1">
    <molecule id="Q9P212-2"/>
    <property type="protein sequence ID" value="ENSP00000501910.1"/>
    <property type="gene ID" value="ENSG00000138193.17"/>
</dbReference>
<dbReference type="GeneID" id="51196"/>
<dbReference type="KEGG" id="hsa:51196"/>
<dbReference type="MANE-Select" id="ENST00000371380.8">
    <property type="protein sequence ID" value="ENSP00000360431.2"/>
    <property type="RefSeq nucleotide sequence ID" value="NM_016341.4"/>
    <property type="RefSeq protein sequence ID" value="NP_057425.3"/>
</dbReference>
<dbReference type="UCSC" id="uc001kjk.4">
    <molecule id="Q9P212-1"/>
    <property type="organism name" value="human"/>
</dbReference>
<dbReference type="AGR" id="HGNC:17175"/>
<dbReference type="CTD" id="51196"/>
<dbReference type="DisGeNET" id="51196"/>
<dbReference type="GeneCards" id="PLCE1"/>
<dbReference type="HGNC" id="HGNC:17175">
    <property type="gene designation" value="PLCE1"/>
</dbReference>
<dbReference type="HPA" id="ENSG00000138193">
    <property type="expression patterns" value="Low tissue specificity"/>
</dbReference>
<dbReference type="MalaCards" id="PLCE1"/>
<dbReference type="MIM" id="608414">
    <property type="type" value="gene"/>
</dbReference>
<dbReference type="MIM" id="610725">
    <property type="type" value="phenotype"/>
</dbReference>
<dbReference type="neXtProt" id="NX_Q9P212"/>
<dbReference type="OpenTargets" id="ENSG00000138193"/>
<dbReference type="Orphanet" id="656">
    <property type="disease" value="Hereditary steroid-resistant nephrotic syndrome"/>
</dbReference>
<dbReference type="PharmGKB" id="PA33391"/>
<dbReference type="VEuPathDB" id="HostDB:ENSG00000138193"/>
<dbReference type="eggNOG" id="KOG0169">
    <property type="taxonomic scope" value="Eukaryota"/>
</dbReference>
<dbReference type="GeneTree" id="ENSGT00940000157356"/>
<dbReference type="HOGENOM" id="CLU_001158_0_0_1"/>
<dbReference type="InParanoid" id="Q9P212"/>
<dbReference type="OMA" id="KKNYMAY"/>
<dbReference type="OrthoDB" id="10068636at2759"/>
<dbReference type="PAN-GO" id="Q9P212">
    <property type="GO annotations" value="2 GO annotations based on evolutionary models"/>
</dbReference>
<dbReference type="PhylomeDB" id="Q9P212"/>
<dbReference type="TreeFam" id="TF314432"/>
<dbReference type="BioCyc" id="MetaCyc:HS06473-MONOMER"/>
<dbReference type="BRENDA" id="3.1.4.11">
    <property type="organism ID" value="2681"/>
</dbReference>
<dbReference type="PathwayCommons" id="Q9P212"/>
<dbReference type="Reactome" id="R-HSA-1855204">
    <property type="pathway name" value="Synthesis of IP3 and IP4 in the cytosol"/>
</dbReference>
<dbReference type="SignaLink" id="Q9P212"/>
<dbReference type="SIGNOR" id="Q9P212"/>
<dbReference type="BioGRID-ORCS" id="51196">
    <property type="hits" value="26 hits in 1155 CRISPR screens"/>
</dbReference>
<dbReference type="ChiTaRS" id="PLCE1">
    <property type="organism name" value="human"/>
</dbReference>
<dbReference type="EvolutionaryTrace" id="Q9P212"/>
<dbReference type="GeneWiki" id="PLCE1"/>
<dbReference type="GenomeRNAi" id="51196"/>
<dbReference type="Pharos" id="Q9P212">
    <property type="development level" value="Tbio"/>
</dbReference>
<dbReference type="PRO" id="PR:Q9P212"/>
<dbReference type="Proteomes" id="UP000005640">
    <property type="component" value="Chromosome 10"/>
</dbReference>
<dbReference type="RNAct" id="Q9P212">
    <property type="molecule type" value="protein"/>
</dbReference>
<dbReference type="Bgee" id="ENSG00000138193">
    <property type="expression patterns" value="Expressed in renal glomerulus and 191 other cell types or tissues"/>
</dbReference>
<dbReference type="ExpressionAtlas" id="Q9P212">
    <property type="expression patterns" value="baseline and differential"/>
</dbReference>
<dbReference type="GO" id="GO:0005829">
    <property type="term" value="C:cytosol"/>
    <property type="evidence" value="ECO:0000314"/>
    <property type="project" value="HPA"/>
</dbReference>
<dbReference type="GO" id="GO:0000139">
    <property type="term" value="C:Golgi membrane"/>
    <property type="evidence" value="ECO:0007669"/>
    <property type="project" value="UniProtKB-SubCell"/>
</dbReference>
<dbReference type="GO" id="GO:0030027">
    <property type="term" value="C:lamellipodium"/>
    <property type="evidence" value="ECO:0000314"/>
    <property type="project" value="UniProtKB"/>
</dbReference>
<dbReference type="GO" id="GO:0005886">
    <property type="term" value="C:plasma membrane"/>
    <property type="evidence" value="ECO:0000314"/>
    <property type="project" value="UniProtKB"/>
</dbReference>
<dbReference type="GO" id="GO:0019899">
    <property type="term" value="F:enzyme binding"/>
    <property type="evidence" value="ECO:0000353"/>
    <property type="project" value="UniProtKB"/>
</dbReference>
<dbReference type="GO" id="GO:0005085">
    <property type="term" value="F:guanyl-nucleotide exchange factor activity"/>
    <property type="evidence" value="ECO:0000304"/>
    <property type="project" value="UniProtKB"/>
</dbReference>
<dbReference type="GO" id="GO:0046872">
    <property type="term" value="F:metal ion binding"/>
    <property type="evidence" value="ECO:0007669"/>
    <property type="project" value="UniProtKB-KW"/>
</dbReference>
<dbReference type="GO" id="GO:0004435">
    <property type="term" value="F:phosphatidylinositol-4,5-bisphosphate phospholipase C activity"/>
    <property type="evidence" value="ECO:0000314"/>
    <property type="project" value="UniProtKB"/>
</dbReference>
<dbReference type="GO" id="GO:0004629">
    <property type="term" value="F:phospholipase C activity"/>
    <property type="evidence" value="ECO:0000314"/>
    <property type="project" value="UniProtKB"/>
</dbReference>
<dbReference type="GO" id="GO:0031267">
    <property type="term" value="F:small GTPase binding"/>
    <property type="evidence" value="ECO:0000314"/>
    <property type="project" value="UniProtKB"/>
</dbReference>
<dbReference type="GO" id="GO:0019722">
    <property type="term" value="P:calcium-mediated signaling"/>
    <property type="evidence" value="ECO:0000303"/>
    <property type="project" value="UniProtKB"/>
</dbReference>
<dbReference type="GO" id="GO:0006651">
    <property type="term" value="P:diacylglycerol biosynthetic process"/>
    <property type="evidence" value="ECO:0000315"/>
    <property type="project" value="UniProtKB"/>
</dbReference>
<dbReference type="GO" id="GO:0007173">
    <property type="term" value="P:epidermal growth factor receptor signaling pathway"/>
    <property type="evidence" value="ECO:0000315"/>
    <property type="project" value="UniProtKB"/>
</dbReference>
<dbReference type="GO" id="GO:0007186">
    <property type="term" value="P:G protein-coupled receptor signaling pathway"/>
    <property type="evidence" value="ECO:0000318"/>
    <property type="project" value="GO_Central"/>
</dbReference>
<dbReference type="GO" id="GO:0032835">
    <property type="term" value="P:glomerulus development"/>
    <property type="evidence" value="ECO:0000315"/>
    <property type="project" value="HGNC-UCL"/>
</dbReference>
<dbReference type="GO" id="GO:0035556">
    <property type="term" value="P:intracellular signal transduction"/>
    <property type="evidence" value="ECO:0000314"/>
    <property type="project" value="UniProtKB"/>
</dbReference>
<dbReference type="GO" id="GO:0016042">
    <property type="term" value="P:lipid catabolic process"/>
    <property type="evidence" value="ECO:0007669"/>
    <property type="project" value="UniProtKB-KW"/>
</dbReference>
<dbReference type="GO" id="GO:0046488">
    <property type="term" value="P:phosphatidylinositol metabolic process"/>
    <property type="evidence" value="ECO:0000318"/>
    <property type="project" value="GO_Central"/>
</dbReference>
<dbReference type="GO" id="GO:0048015">
    <property type="term" value="P:phosphatidylinositol-mediated signaling"/>
    <property type="evidence" value="ECO:0000318"/>
    <property type="project" value="GO_Central"/>
</dbReference>
<dbReference type="GO" id="GO:0007200">
    <property type="term" value="P:phospholipase C-activating G protein-coupled receptor signaling pathway"/>
    <property type="evidence" value="ECO:0000314"/>
    <property type="project" value="UniProtKB"/>
</dbReference>
<dbReference type="GO" id="GO:0010592">
    <property type="term" value="P:positive regulation of lamellipodium assembly"/>
    <property type="evidence" value="ECO:0000315"/>
    <property type="project" value="UniProtKB"/>
</dbReference>
<dbReference type="GO" id="GO:0007265">
    <property type="term" value="P:Ras protein signal transduction"/>
    <property type="evidence" value="ECO:0000314"/>
    <property type="project" value="UniProtKB"/>
</dbReference>
<dbReference type="GO" id="GO:0051209">
    <property type="term" value="P:release of sequestered calcium ion into cytosol"/>
    <property type="evidence" value="ECO:0000318"/>
    <property type="project" value="GO_Central"/>
</dbReference>
<dbReference type="CDD" id="cd00275">
    <property type="entry name" value="C2_PLC_like"/>
    <property type="match status" value="1"/>
</dbReference>
<dbReference type="CDD" id="cd16203">
    <property type="entry name" value="EFh_PI-PLCepsilon"/>
    <property type="match status" value="1"/>
</dbReference>
<dbReference type="CDD" id="cd08596">
    <property type="entry name" value="PI-PLCc_epsilon"/>
    <property type="match status" value="1"/>
</dbReference>
<dbReference type="CDD" id="cd17229">
    <property type="entry name" value="RA1_PLC-epsilon"/>
    <property type="match status" value="1"/>
</dbReference>
<dbReference type="CDD" id="cd01780">
    <property type="entry name" value="RA2_PLC-epsilon"/>
    <property type="match status" value="1"/>
</dbReference>
<dbReference type="FunFam" id="1.10.238.10:FF:000092">
    <property type="entry name" value="Phosphoinositide phospholipase C"/>
    <property type="match status" value="1"/>
</dbReference>
<dbReference type="FunFam" id="2.60.40.150:FF:000085">
    <property type="entry name" value="Phosphoinositide phospholipase C"/>
    <property type="match status" value="1"/>
</dbReference>
<dbReference type="FunFam" id="3.10.20.90:FF:000086">
    <property type="entry name" value="Phosphoinositide phospholipase C"/>
    <property type="match status" value="1"/>
</dbReference>
<dbReference type="FunFam" id="3.10.20.90:FF:000118">
    <property type="entry name" value="Phosphoinositide phospholipase C"/>
    <property type="match status" value="1"/>
</dbReference>
<dbReference type="FunFam" id="3.20.20.190:FF:000090">
    <property type="entry name" value="Phosphoinositide phospholipase C"/>
    <property type="match status" value="1"/>
</dbReference>
<dbReference type="Gene3D" id="2.60.40.150">
    <property type="entry name" value="C2 domain"/>
    <property type="match status" value="1"/>
</dbReference>
<dbReference type="Gene3D" id="1.10.238.10">
    <property type="entry name" value="EF-hand"/>
    <property type="match status" value="1"/>
</dbReference>
<dbReference type="Gene3D" id="3.20.20.190">
    <property type="entry name" value="Phosphatidylinositol (PI) phosphodiesterase"/>
    <property type="match status" value="1"/>
</dbReference>
<dbReference type="Gene3D" id="3.10.20.90">
    <property type="entry name" value="Phosphatidylinositol 3-kinase Catalytic Subunit, Chain A, domain 1"/>
    <property type="match status" value="2"/>
</dbReference>
<dbReference type="Gene3D" id="1.10.840.10">
    <property type="entry name" value="Ras guanine-nucleotide exchange factors catalytic domain"/>
    <property type="match status" value="1"/>
</dbReference>
<dbReference type="InterPro" id="IPR000008">
    <property type="entry name" value="C2_dom"/>
</dbReference>
<dbReference type="InterPro" id="IPR035892">
    <property type="entry name" value="C2_domain_sf"/>
</dbReference>
<dbReference type="InterPro" id="IPR011992">
    <property type="entry name" value="EF-hand-dom_pair"/>
</dbReference>
<dbReference type="InterPro" id="IPR001192">
    <property type="entry name" value="PI-PLC_fam"/>
</dbReference>
<dbReference type="InterPro" id="IPR046973">
    <property type="entry name" value="PLC-epsilon1_cat"/>
</dbReference>
<dbReference type="InterPro" id="IPR028398">
    <property type="entry name" value="PLC-epsilon1_RA2"/>
</dbReference>
<dbReference type="InterPro" id="IPR017946">
    <property type="entry name" value="PLC-like_Pdiesterase_TIM-brl"/>
</dbReference>
<dbReference type="InterPro" id="IPR015359">
    <property type="entry name" value="PLC_EF-hand-like"/>
</dbReference>
<dbReference type="InterPro" id="IPR046974">
    <property type="entry name" value="PLC_epsilon1_EF"/>
</dbReference>
<dbReference type="InterPro" id="IPR000909">
    <property type="entry name" value="PLipase_C_PInositol-sp_X_dom"/>
</dbReference>
<dbReference type="InterPro" id="IPR001711">
    <property type="entry name" value="PLipase_C_Pinositol-sp_Y"/>
</dbReference>
<dbReference type="InterPro" id="IPR000159">
    <property type="entry name" value="RA_dom"/>
</dbReference>
<dbReference type="InterPro" id="IPR023578">
    <property type="entry name" value="Ras_GEF_dom_sf"/>
</dbReference>
<dbReference type="InterPro" id="IPR001895">
    <property type="entry name" value="RASGEF_cat_dom"/>
</dbReference>
<dbReference type="InterPro" id="IPR036964">
    <property type="entry name" value="RASGEF_cat_dom_sf"/>
</dbReference>
<dbReference type="InterPro" id="IPR029071">
    <property type="entry name" value="Ubiquitin-like_domsf"/>
</dbReference>
<dbReference type="PANTHER" id="PTHR10336:SF6">
    <property type="entry name" value="1-PHOSPHATIDYLINOSITOL 4,5-BISPHOSPHATE PHOSPHODIESTERASE EPSILON-1"/>
    <property type="match status" value="1"/>
</dbReference>
<dbReference type="PANTHER" id="PTHR10336">
    <property type="entry name" value="PHOSPHOINOSITIDE-SPECIFIC PHOSPHOLIPASE C FAMILY PROTEIN"/>
    <property type="match status" value="1"/>
</dbReference>
<dbReference type="Pfam" id="PF00168">
    <property type="entry name" value="C2"/>
    <property type="match status" value="1"/>
</dbReference>
<dbReference type="Pfam" id="PF09279">
    <property type="entry name" value="EF-hand_like"/>
    <property type="match status" value="1"/>
</dbReference>
<dbReference type="Pfam" id="PF00388">
    <property type="entry name" value="PI-PLC-X"/>
    <property type="match status" value="1"/>
</dbReference>
<dbReference type="Pfam" id="PF00387">
    <property type="entry name" value="PI-PLC-Y"/>
    <property type="match status" value="1"/>
</dbReference>
<dbReference type="Pfam" id="PF00788">
    <property type="entry name" value="RA"/>
    <property type="match status" value="1"/>
</dbReference>
<dbReference type="Pfam" id="PF00617">
    <property type="entry name" value="RasGEF"/>
    <property type="match status" value="1"/>
</dbReference>
<dbReference type="PRINTS" id="PR00390">
    <property type="entry name" value="PHPHLIPASEC"/>
</dbReference>
<dbReference type="SMART" id="SM00239">
    <property type="entry name" value="C2"/>
    <property type="match status" value="1"/>
</dbReference>
<dbReference type="SMART" id="SM00148">
    <property type="entry name" value="PLCXc"/>
    <property type="match status" value="1"/>
</dbReference>
<dbReference type="SMART" id="SM00149">
    <property type="entry name" value="PLCYc"/>
    <property type="match status" value="1"/>
</dbReference>
<dbReference type="SMART" id="SM00314">
    <property type="entry name" value="RA"/>
    <property type="match status" value="1"/>
</dbReference>
<dbReference type="SMART" id="SM00147">
    <property type="entry name" value="RasGEF"/>
    <property type="match status" value="1"/>
</dbReference>
<dbReference type="SUPFAM" id="SSF49562">
    <property type="entry name" value="C2 domain (Calcium/lipid-binding domain, CaLB)"/>
    <property type="match status" value="1"/>
</dbReference>
<dbReference type="SUPFAM" id="SSF47473">
    <property type="entry name" value="EF-hand"/>
    <property type="match status" value="1"/>
</dbReference>
<dbReference type="SUPFAM" id="SSF51695">
    <property type="entry name" value="PLC-like phosphodiesterases"/>
    <property type="match status" value="1"/>
</dbReference>
<dbReference type="SUPFAM" id="SSF48366">
    <property type="entry name" value="Ras GEF"/>
    <property type="match status" value="1"/>
</dbReference>
<dbReference type="SUPFAM" id="SSF54236">
    <property type="entry name" value="Ubiquitin-like"/>
    <property type="match status" value="2"/>
</dbReference>
<dbReference type="PROSITE" id="PS50004">
    <property type="entry name" value="C2"/>
    <property type="match status" value="1"/>
</dbReference>
<dbReference type="PROSITE" id="PS50007">
    <property type="entry name" value="PIPLC_X_DOMAIN"/>
    <property type="match status" value="1"/>
</dbReference>
<dbReference type="PROSITE" id="PS50008">
    <property type="entry name" value="PIPLC_Y_DOMAIN"/>
    <property type="match status" value="1"/>
</dbReference>
<dbReference type="PROSITE" id="PS50200">
    <property type="entry name" value="RA"/>
    <property type="match status" value="1"/>
</dbReference>
<dbReference type="PROSITE" id="PS50009">
    <property type="entry name" value="RASGEF_CAT"/>
    <property type="match status" value="1"/>
</dbReference>
<comment type="function">
    <text evidence="11 13 14 15 17 23 24 26">The production of the second messenger molecules diacylglycerol (DAG) and inositol 1,4,5-trisphosphate (IP3) is mediated by activated phosphatidylinositol-specific phospholipase C enzymes. PLCE1 is a bifunctional enzyme which also regulates small GTPases of the Ras superfamily through its Ras guanine-exchange factor (RasGEF) activity. As an effector of heterotrimeric and small G-protein, it may play a role in cell survival, cell growth, actin organization and T-cell activation. In podocytes, is involved in the regulation of lamellipodia formation. Acts downstream of AVIL to allow ARP2/3 complex assembly (PubMed:29058690).</text>
</comment>
<comment type="catalytic activity">
    <reaction evidence="11 12">
        <text>a 1,2-diacyl-sn-glycero-3-phospho-(1D-myo-inositol-4,5-bisphosphate) + H2O = 1D-myo-inositol 1,4,5-trisphosphate + a 1,2-diacyl-sn-glycerol + H(+)</text>
        <dbReference type="Rhea" id="RHEA:33179"/>
        <dbReference type="ChEBI" id="CHEBI:15377"/>
        <dbReference type="ChEBI" id="CHEBI:15378"/>
        <dbReference type="ChEBI" id="CHEBI:17815"/>
        <dbReference type="ChEBI" id="CHEBI:58456"/>
        <dbReference type="ChEBI" id="CHEBI:203600"/>
        <dbReference type="EC" id="3.1.4.11"/>
    </reaction>
</comment>
<comment type="cofactor">
    <cofactor evidence="12">
        <name>Ca(2+)</name>
        <dbReference type="ChEBI" id="CHEBI:29108"/>
    </cofactor>
</comment>
<comment type="activity regulation">
    <text evidence="11 12 14 15 18 23">Activated by the heterotrimeric G-protein subunits GNA12, GNA13 and GNB1-GNG2. Activated by HRAS, RAP1A, RHOA, RHOB, RHOC, RRAS and RRAS2. Activated by the G(s)-coupled GPCRs ADRB2, PTGER1 and CHRM3 through cyclic-AMP formation and RAP2B activation. Inhibited by G(i)-coupled GPCRs.</text>
</comment>
<comment type="subunit">
    <text evidence="3 12 16 22 23 24 26">Interacts with RHOA (By similarity). Interacts with GTP-bound HRAS, RAP1A, RAP2A, RAP2B and RRAS (PubMed:11022048, PubMed:12444546, PubMed:16483931, PubMed:16537651). Interacts with AVIL (PubMed:29058690). Interacts with IQGAP1 (PubMed:17086182).</text>
</comment>
<comment type="subcellular location">
    <subcellularLocation>
        <location>Cytoplasm</location>
        <location>Cytosol</location>
    </subcellularLocation>
    <subcellularLocation>
        <location>Cell membrane</location>
    </subcellularLocation>
    <subcellularLocation>
        <location>Golgi apparatus membrane</location>
    </subcellularLocation>
    <subcellularLocation>
        <location evidence="26">Cell projection</location>
        <location evidence="26">Lamellipodium</location>
    </subcellularLocation>
    <text>Recruited to plasma membrane by activated HRAS and RAP2. Recruited to perinuclear membrane by activated RAP1A. Isoform 1 and isoform 2 associates with Golgi membranes.</text>
</comment>
<comment type="alternative products">
    <event type="alternative splicing"/>
    <isoform>
        <id>Q9P212-1</id>
        <name>1</name>
        <name>PLCepsilon1a</name>
        <sequence type="displayed"/>
    </isoform>
    <isoform>
        <id>Q9P212-2</id>
        <name>2</name>
        <name>PLCepsilon1b</name>
        <sequence type="described" ref="VSP_021335 VSP_021336"/>
    </isoform>
</comment>
<comment type="tissue specificity">
    <text evidence="20 26">Widely expressed. Expressed in podocytes (PubMed:29058690).</text>
</comment>
<comment type="tissue specificity">
    <molecule>Isoform 1</molecule>
    <text evidence="12 20">Broadly expressed and only absent in peripheral blood leukocytes.</text>
</comment>
<comment type="tissue specificity">
    <molecule>Isoform 2</molecule>
    <text evidence="11 20">Specifically expressed in placenta, lung and spleen.</text>
</comment>
<comment type="induction">
    <text evidence="21">Overexpressed during heart failure.</text>
</comment>
<comment type="domain">
    <text>The Ras-associating domain 1 is degenerated and may not bind HRAS. The Ras-associating domain 2 mediates interaction with GTP-bound HRAS, RAP1A, RAP2A and RAP2B and recruitment of HRAS to the cell membrane.</text>
</comment>
<comment type="domain">
    <text>The Ras-GEF domain has a GEF activity towards HRAS and RAP1A. Mediates activation of the mitogen-activated protein kinase pathway.</text>
</comment>
<comment type="disease" evidence="24 25">
    <disease id="DI-02041">
        <name>Nephrotic syndrome 3</name>
        <acronym>NPHS3</acronym>
        <description>A form of nephrotic syndrome, a renal disease clinically characterized by severe proteinuria, resulting in complications such as hypoalbuminemia, hyperlipidemia and edema. Kidney biopsies show non-specific histologic changes such as focal segmental glomerulosclerosis and diffuse mesangial proliferation. Some affected individuals have an inherited steroid-resistant form and progress to end-stage renal failure. Most patients with NPHS3 show diffuse mesangial sclerosis on renal biopsy, which is a pathologic entity characterized by mesangial matrix expansion with no mesangial hypercellularity, hypertrophy of the podocytes, vacuolized podocytes, thickened basement membranes, and diminished patency of the capillary lumen.</description>
        <dbReference type="MIM" id="610725"/>
    </disease>
    <text>The disease is caused by variants affecting the gene represented in this entry.</text>
</comment>
<comment type="sequence caution" evidence="30">
    <conflict type="frameshift">
        <sequence resource="EMBL-CDS" id="AAF22005"/>
    </conflict>
</comment>
<comment type="sequence caution" evidence="30">
    <conflict type="frameshift">
        <sequence resource="EMBL-CDS" id="AAG17145"/>
    </conflict>
</comment>
<comment type="sequence caution" evidence="30">
    <conflict type="erroneous initiation">
        <sequence resource="EMBL-CDS" id="BAA96040"/>
    </conflict>
    <text>Extended N-terminus.</text>
</comment>
<comment type="sequence caution" evidence="30">
    <conflict type="erroneous initiation">
        <sequence resource="EMBL-CDS" id="BAB14090"/>
    </conflict>
    <text>Truncated N-terminus.</text>
</comment>
<name>PLCE1_HUMAN</name>
<reference key="1">
    <citation type="journal article" date="2001" name="J. Biol. Chem.">
        <title>Regulation of a novel human phospholipase C, PLCepsilon, through membrane targeting by Ras.</title>
        <authorList>
            <person name="Song C."/>
            <person name="Hu C.-D."/>
            <person name="Masago M."/>
            <person name="Kariya K."/>
            <person name="Yamawaki-Kataoka Y."/>
            <person name="Shibatohge M."/>
            <person name="Wu D."/>
            <person name="Satoh T."/>
            <person name="Kataoka T."/>
        </authorList>
    </citation>
    <scope>NUCLEOTIDE SEQUENCE [MRNA] (ISOFORM 1)</scope>
    <scope>TISSUE SPECIFICITY</scope>
    <scope>CATALYTIC ACTIVITY</scope>
    <scope>COFACTOR</scope>
    <scope>INTERACTION WITH HRAS AND RAP1A</scope>
    <scope>SUBCELLULAR LOCATION</scope>
    <scope>ACTIVITY REGULATION</scope>
    <scope>VARIANTS ILE-1777 AND ARG-1927</scope>
    <source>
        <tissue>Fetal brain</tissue>
    </source>
</reference>
<reference key="2">
    <citation type="journal article" date="2001" name="J. Biol. Chem.">
        <title>A novel bifunctional phospholipase C that is regulated by Galpha 12 and stimulates the Ras/mitogen-activated protein kinase pathway.</title>
        <authorList>
            <person name="Lopez I."/>
            <person name="Mak E.C."/>
            <person name="Ding J."/>
            <person name="Hamm H.E."/>
            <person name="Lomasney J.W."/>
        </authorList>
    </citation>
    <scope>NUCLEOTIDE SEQUENCE [MRNA] (ISOFORM 2)</scope>
    <scope>FUNCTION</scope>
    <scope>TISSUE SPECIFICITY</scope>
    <scope>SUBCELLULAR LOCATION</scope>
    <scope>CATALYTIC ACTIVITY</scope>
    <scope>ACTIVITY REGULATION</scope>
    <scope>MUTAGENESIS OF HIS-1452</scope>
    <source>
        <tissue>Heart</tissue>
    </source>
</reference>
<reference key="3">
    <citation type="journal article" date="2000" name="DNA Res.">
        <title>Prediction of the coding sequences of unidentified human genes. XVII. The complete sequences of 100 new cDNA clones from brain which code for large proteins in vitro.</title>
        <authorList>
            <person name="Nagase T."/>
            <person name="Kikuno R."/>
            <person name="Ishikawa K."/>
            <person name="Hirosawa M."/>
            <person name="Ohara O."/>
        </authorList>
    </citation>
    <scope>NUCLEOTIDE SEQUENCE [LARGE SCALE MRNA] (ISOFORM 1)</scope>
    <scope>VARIANT ARG-1927</scope>
    <source>
        <tissue>Brain</tissue>
    </source>
</reference>
<reference key="4">
    <citation type="submission" date="2003-08" db="EMBL/GenBank/DDBJ databases">
        <authorList>
            <person name="Ohara O."/>
            <person name="Nagase T."/>
            <person name="Kikuno R."/>
        </authorList>
    </citation>
    <scope>SEQUENCE REVISION</scope>
</reference>
<reference key="5">
    <citation type="journal article" date="2004" name="Nature">
        <title>The DNA sequence and comparative analysis of human chromosome 10.</title>
        <authorList>
            <person name="Deloukas P."/>
            <person name="Earthrowl M.E."/>
            <person name="Grafham D.V."/>
            <person name="Rubenfield M."/>
            <person name="French L."/>
            <person name="Steward C.A."/>
            <person name="Sims S.K."/>
            <person name="Jones M.C."/>
            <person name="Searle S."/>
            <person name="Scott C."/>
            <person name="Howe K."/>
            <person name="Hunt S.E."/>
            <person name="Andrews T.D."/>
            <person name="Gilbert J.G.R."/>
            <person name="Swarbreck D."/>
            <person name="Ashurst J.L."/>
            <person name="Taylor A."/>
            <person name="Battles J."/>
            <person name="Bird C.P."/>
            <person name="Ainscough R."/>
            <person name="Almeida J.P."/>
            <person name="Ashwell R.I.S."/>
            <person name="Ambrose K.D."/>
            <person name="Babbage A.K."/>
            <person name="Bagguley C.L."/>
            <person name="Bailey J."/>
            <person name="Banerjee R."/>
            <person name="Bates K."/>
            <person name="Beasley H."/>
            <person name="Bray-Allen S."/>
            <person name="Brown A.J."/>
            <person name="Brown J.Y."/>
            <person name="Burford D.C."/>
            <person name="Burrill W."/>
            <person name="Burton J."/>
            <person name="Cahill P."/>
            <person name="Camire D."/>
            <person name="Carter N.P."/>
            <person name="Chapman J.C."/>
            <person name="Clark S.Y."/>
            <person name="Clarke G."/>
            <person name="Clee C.M."/>
            <person name="Clegg S."/>
            <person name="Corby N."/>
            <person name="Coulson A."/>
            <person name="Dhami P."/>
            <person name="Dutta I."/>
            <person name="Dunn M."/>
            <person name="Faulkner L."/>
            <person name="Frankish A."/>
            <person name="Frankland J.A."/>
            <person name="Garner P."/>
            <person name="Garnett J."/>
            <person name="Gribble S."/>
            <person name="Griffiths C."/>
            <person name="Grocock R."/>
            <person name="Gustafson E."/>
            <person name="Hammond S."/>
            <person name="Harley J.L."/>
            <person name="Hart E."/>
            <person name="Heath P.D."/>
            <person name="Ho T.P."/>
            <person name="Hopkins B."/>
            <person name="Horne J."/>
            <person name="Howden P.J."/>
            <person name="Huckle E."/>
            <person name="Hynds C."/>
            <person name="Johnson C."/>
            <person name="Johnson D."/>
            <person name="Kana A."/>
            <person name="Kay M."/>
            <person name="Kimberley A.M."/>
            <person name="Kershaw J.K."/>
            <person name="Kokkinaki M."/>
            <person name="Laird G.K."/>
            <person name="Lawlor S."/>
            <person name="Lee H.M."/>
            <person name="Leongamornlert D.A."/>
            <person name="Laird G."/>
            <person name="Lloyd C."/>
            <person name="Lloyd D.M."/>
            <person name="Loveland J."/>
            <person name="Lovell J."/>
            <person name="McLaren S."/>
            <person name="McLay K.E."/>
            <person name="McMurray A."/>
            <person name="Mashreghi-Mohammadi M."/>
            <person name="Matthews L."/>
            <person name="Milne S."/>
            <person name="Nickerson T."/>
            <person name="Nguyen M."/>
            <person name="Overton-Larty E."/>
            <person name="Palmer S.A."/>
            <person name="Pearce A.V."/>
            <person name="Peck A.I."/>
            <person name="Pelan S."/>
            <person name="Phillimore B."/>
            <person name="Porter K."/>
            <person name="Rice C.M."/>
            <person name="Rogosin A."/>
            <person name="Ross M.T."/>
            <person name="Sarafidou T."/>
            <person name="Sehra H.K."/>
            <person name="Shownkeen R."/>
            <person name="Skuce C.D."/>
            <person name="Smith M."/>
            <person name="Standring L."/>
            <person name="Sycamore N."/>
            <person name="Tester J."/>
            <person name="Thorpe A."/>
            <person name="Torcasso W."/>
            <person name="Tracey A."/>
            <person name="Tromans A."/>
            <person name="Tsolas J."/>
            <person name="Wall M."/>
            <person name="Walsh J."/>
            <person name="Wang H."/>
            <person name="Weinstock K."/>
            <person name="West A.P."/>
            <person name="Willey D.L."/>
            <person name="Whitehead S.L."/>
            <person name="Wilming L."/>
            <person name="Wray P.W."/>
            <person name="Young L."/>
            <person name="Chen Y."/>
            <person name="Lovering R.C."/>
            <person name="Moschonas N.K."/>
            <person name="Siebert R."/>
            <person name="Fechtel K."/>
            <person name="Bentley D."/>
            <person name="Durbin R.M."/>
            <person name="Hubbard T."/>
            <person name="Doucette-Stamm L."/>
            <person name="Beck S."/>
            <person name="Smith D.R."/>
            <person name="Rogers J."/>
        </authorList>
    </citation>
    <scope>NUCLEOTIDE SEQUENCE [LARGE SCALE GENOMIC DNA]</scope>
</reference>
<reference key="6">
    <citation type="submission" date="2005-09" db="EMBL/GenBank/DDBJ databases">
        <authorList>
            <person name="Mural R.J."/>
            <person name="Istrail S."/>
            <person name="Sutton G.G."/>
            <person name="Florea L."/>
            <person name="Halpern A.L."/>
            <person name="Mobarry C.M."/>
            <person name="Lippert R."/>
            <person name="Walenz B."/>
            <person name="Shatkay H."/>
            <person name="Dew I."/>
            <person name="Miller J.R."/>
            <person name="Flanigan M.J."/>
            <person name="Edwards N.J."/>
            <person name="Bolanos R."/>
            <person name="Fasulo D."/>
            <person name="Halldorsson B.V."/>
            <person name="Hannenhalli S."/>
            <person name="Turner R."/>
            <person name="Yooseph S."/>
            <person name="Lu F."/>
            <person name="Nusskern D.R."/>
            <person name="Shue B.C."/>
            <person name="Zheng X.H."/>
            <person name="Zhong F."/>
            <person name="Delcher A.L."/>
            <person name="Huson D.H."/>
            <person name="Kravitz S.A."/>
            <person name="Mouchard L."/>
            <person name="Reinert K."/>
            <person name="Remington K.A."/>
            <person name="Clark A.G."/>
            <person name="Waterman M.S."/>
            <person name="Eichler E.E."/>
            <person name="Adams M.D."/>
            <person name="Hunkapiller M.W."/>
            <person name="Myers E.W."/>
            <person name="Venter J.C."/>
        </authorList>
    </citation>
    <scope>NUCLEOTIDE SEQUENCE [LARGE SCALE GENOMIC DNA]</scope>
</reference>
<reference key="7">
    <citation type="journal article" date="2004" name="Genome Res.">
        <title>The status, quality, and expansion of the NIH full-length cDNA project: the Mammalian Gene Collection (MGC).</title>
        <authorList>
            <consortium name="The MGC Project Team"/>
        </authorList>
    </citation>
    <scope>NUCLEOTIDE SEQUENCE [LARGE SCALE MRNA] (ISOFORM 1)</scope>
    <scope>VARIANT ARG-1927</scope>
    <source>
        <tissue>Brain</tissue>
    </source>
</reference>
<reference key="8">
    <citation type="submission" date="1999-01" db="EMBL/GenBank/DDBJ databases">
        <title>A novel phospholipase C enriched in pancreas.</title>
        <authorList>
            <person name="Kawasaki H."/>
            <person name="Chen E.J."/>
            <person name="Springett G.M."/>
            <person name="Graybiel A.M."/>
            <person name="Housman D.E."/>
        </authorList>
    </citation>
    <scope>NUCLEOTIDE SEQUENCE [MRNA] OF 1098-2302 (ISOFORMS 1/2)</scope>
    <scope>VARIANTS ILE-1777 AND ARG-1927</scope>
    <source>
        <tissue>Pancreas</tissue>
    </source>
</reference>
<reference key="9">
    <citation type="journal article" date="2004" name="Nat. Genet.">
        <title>Complete sequencing and characterization of 21,243 full-length human cDNAs.</title>
        <authorList>
            <person name="Ota T."/>
            <person name="Suzuki Y."/>
            <person name="Nishikawa T."/>
            <person name="Otsuki T."/>
            <person name="Sugiyama T."/>
            <person name="Irie R."/>
            <person name="Wakamatsu A."/>
            <person name="Hayashi K."/>
            <person name="Sato H."/>
            <person name="Nagai K."/>
            <person name="Kimura K."/>
            <person name="Makita H."/>
            <person name="Sekine M."/>
            <person name="Obayashi M."/>
            <person name="Nishi T."/>
            <person name="Shibahara T."/>
            <person name="Tanaka T."/>
            <person name="Ishii S."/>
            <person name="Yamamoto J."/>
            <person name="Saito K."/>
            <person name="Kawai Y."/>
            <person name="Isono Y."/>
            <person name="Nakamura Y."/>
            <person name="Nagahari K."/>
            <person name="Murakami K."/>
            <person name="Yasuda T."/>
            <person name="Iwayanagi T."/>
            <person name="Wagatsuma M."/>
            <person name="Shiratori A."/>
            <person name="Sudo H."/>
            <person name="Hosoiri T."/>
            <person name="Kaku Y."/>
            <person name="Kodaira H."/>
            <person name="Kondo H."/>
            <person name="Sugawara M."/>
            <person name="Takahashi M."/>
            <person name="Kanda K."/>
            <person name="Yokoi T."/>
            <person name="Furuya T."/>
            <person name="Kikkawa E."/>
            <person name="Omura Y."/>
            <person name="Abe K."/>
            <person name="Kamihara K."/>
            <person name="Katsuta N."/>
            <person name="Sato K."/>
            <person name="Tanikawa M."/>
            <person name="Yamazaki M."/>
            <person name="Ninomiya K."/>
            <person name="Ishibashi T."/>
            <person name="Yamashita H."/>
            <person name="Murakawa K."/>
            <person name="Fujimori K."/>
            <person name="Tanai H."/>
            <person name="Kimata M."/>
            <person name="Watanabe M."/>
            <person name="Hiraoka S."/>
            <person name="Chiba Y."/>
            <person name="Ishida S."/>
            <person name="Ono Y."/>
            <person name="Takiguchi S."/>
            <person name="Watanabe S."/>
            <person name="Yosida M."/>
            <person name="Hotuta T."/>
            <person name="Kusano J."/>
            <person name="Kanehori K."/>
            <person name="Takahashi-Fujii A."/>
            <person name="Hara H."/>
            <person name="Tanase T.-O."/>
            <person name="Nomura Y."/>
            <person name="Togiya S."/>
            <person name="Komai F."/>
            <person name="Hara R."/>
            <person name="Takeuchi K."/>
            <person name="Arita M."/>
            <person name="Imose N."/>
            <person name="Musashino K."/>
            <person name="Yuuki H."/>
            <person name="Oshima A."/>
            <person name="Sasaki N."/>
            <person name="Aotsuka S."/>
            <person name="Yoshikawa Y."/>
            <person name="Matsunawa H."/>
            <person name="Ichihara T."/>
            <person name="Shiohata N."/>
            <person name="Sano S."/>
            <person name="Moriya S."/>
            <person name="Momiyama H."/>
            <person name="Satoh N."/>
            <person name="Takami S."/>
            <person name="Terashima Y."/>
            <person name="Suzuki O."/>
            <person name="Nakagawa S."/>
            <person name="Senoh A."/>
            <person name="Mizoguchi H."/>
            <person name="Goto Y."/>
            <person name="Shimizu F."/>
            <person name="Wakebe H."/>
            <person name="Hishigaki H."/>
            <person name="Watanabe T."/>
            <person name="Sugiyama A."/>
            <person name="Takemoto M."/>
            <person name="Kawakami B."/>
            <person name="Yamazaki M."/>
            <person name="Watanabe K."/>
            <person name="Kumagai A."/>
            <person name="Itakura S."/>
            <person name="Fukuzumi Y."/>
            <person name="Fujimori Y."/>
            <person name="Komiyama M."/>
            <person name="Tashiro H."/>
            <person name="Tanigami A."/>
            <person name="Fujiwara T."/>
            <person name="Ono T."/>
            <person name="Yamada K."/>
            <person name="Fujii Y."/>
            <person name="Ozaki K."/>
            <person name="Hirao M."/>
            <person name="Ohmori Y."/>
            <person name="Kawabata A."/>
            <person name="Hikiji T."/>
            <person name="Kobatake N."/>
            <person name="Inagaki H."/>
            <person name="Ikema Y."/>
            <person name="Okamoto S."/>
            <person name="Okitani R."/>
            <person name="Kawakami T."/>
            <person name="Noguchi S."/>
            <person name="Itoh T."/>
            <person name="Shigeta K."/>
            <person name="Senba T."/>
            <person name="Matsumura K."/>
            <person name="Nakajima Y."/>
            <person name="Mizuno T."/>
            <person name="Morinaga M."/>
            <person name="Sasaki M."/>
            <person name="Togashi T."/>
            <person name="Oyama M."/>
            <person name="Hata H."/>
            <person name="Watanabe M."/>
            <person name="Komatsu T."/>
            <person name="Mizushima-Sugano J."/>
            <person name="Satoh T."/>
            <person name="Shirai Y."/>
            <person name="Takahashi Y."/>
            <person name="Nakagawa K."/>
            <person name="Okumura K."/>
            <person name="Nagase T."/>
            <person name="Nomura N."/>
            <person name="Kikuchi H."/>
            <person name="Masuho Y."/>
            <person name="Yamashita R."/>
            <person name="Nakai K."/>
            <person name="Yada T."/>
            <person name="Nakamura Y."/>
            <person name="Ohara O."/>
            <person name="Isogai T."/>
            <person name="Sugano S."/>
        </authorList>
    </citation>
    <scope>NUCLEOTIDE SEQUENCE [LARGE SCALE MRNA] OF 1-1383 (ISOFORM 2)</scope>
    <scope>NUCLEOTIDE SEQUENCE [LARGE SCALE MRNA] OF 1475-2302 (ISOFORMS 1/2)</scope>
    <source>
        <tissue>Brain</tissue>
        <tissue>Teratocarcinoma</tissue>
    </source>
</reference>
<reference key="10">
    <citation type="submission" date="2005-03" db="EMBL/GenBank/DDBJ databases">
        <title>Sequence of cDNA clone MPMGp800D13530.</title>
        <authorList>
            <person name="Buessow K."/>
        </authorList>
    </citation>
    <scope>NUCLEOTIDE SEQUENCE [MRNA] OF 1987-2302 (ISOFORMS 1/2)</scope>
    <source>
        <tissue>Brain</tissue>
    </source>
</reference>
<reference key="11">
    <citation type="journal article" date="2001" name="J. Biol. Chem.">
        <title>Role of the CDC25 homology domain of phospholipase Cepsilon in amplification of Rap1-dependent signaling.</title>
        <authorList>
            <person name="Jin T.-G."/>
            <person name="Satoh T."/>
            <person name="Liao Y."/>
            <person name="Song C."/>
            <person name="Gao X."/>
            <person name="Kariya K."/>
            <person name="Hu C.-D."/>
            <person name="Kataoka T."/>
        </authorList>
    </citation>
    <scope>FUNCTION</scope>
    <scope>SUBCELLULAR LOCATION</scope>
</reference>
<reference key="12">
    <citation type="journal article" date="2001" name="Nat. Cell Biol.">
        <title>A new phospholipase-C-calcium signalling pathway mediated by cyclic AMP and a Rap GTPase.</title>
        <authorList>
            <person name="Schmidt M."/>
            <person name="Evellin S."/>
            <person name="Weernink P.A.O."/>
            <person name="von Dorp F."/>
            <person name="Rehmann H."/>
            <person name="Lomasney J.W."/>
            <person name="Jakobs K.H."/>
        </authorList>
    </citation>
    <scope>FUNCTION</scope>
    <scope>ACTIVITY REGULATION</scope>
</reference>
<reference key="13">
    <citation type="journal article" date="2002" name="J. Biol. Chem.">
        <title>Stimulation of phospholipase C-epsilon by the M3 muscarinic acetylcholine receptor mediated by cyclic AMP and the GTPase Rap2B.</title>
        <authorList>
            <person name="Evellin S."/>
            <person name="Nolte J."/>
            <person name="Tysack K."/>
            <person name="vom Dorp F."/>
            <person name="Thiel M."/>
            <person name="Weernink P.A.O."/>
            <person name="Jakobs K.H."/>
            <person name="Webb E.J."/>
            <person name="Lomasney J.W."/>
            <person name="Schmidt M."/>
        </authorList>
    </citation>
    <scope>FUNCTION</scope>
    <scope>ACTIVITY REGULATION</scope>
</reference>
<reference key="14">
    <citation type="journal article" date="2002" name="Oncogene">
        <title>Differential roles of Ras and Rap1 in growth factor-dependent activation of phospholipase C epsilon.</title>
        <authorList>
            <person name="Song C."/>
            <person name="Satoh T."/>
            <person name="Edamatsu H."/>
            <person name="Wu D."/>
            <person name="Tadano M."/>
            <person name="Gao X."/>
            <person name="Kataoka T."/>
        </authorList>
    </citation>
    <scope>INTERACTION WITH RAP1A; RAP2A AND RAP2B</scope>
</reference>
<reference key="15">
    <citation type="journal article" date="2003" name="Proc. Natl. Acad. Sci. U.S.A.">
        <title>Activation of CD4 T cells by Raf-independent effectors of Ras.</title>
        <authorList>
            <person name="Czyzyk J."/>
            <person name="Brogdon J.L."/>
            <person name="Badou A."/>
            <person name="Henegariu O."/>
            <person name="Preston Hurlburt P."/>
            <person name="Flavell R."/>
            <person name="Bottomly K."/>
        </authorList>
    </citation>
    <scope>FUNCTION</scope>
</reference>
<reference key="16">
    <citation type="journal article" date="2004" name="Cell. Signal.">
        <title>Inhibition of phospholipase C-epsilon by Gi-coupled receptors.</title>
        <authorList>
            <person name="vom Dorp F."/>
            <person name="Sari A.Y."/>
            <person name="Sanders H."/>
            <person name="Keiper M."/>
            <person name="Oude Weernink P.A."/>
            <person name="Jakobs K.H."/>
            <person name="Schmidt M."/>
        </authorList>
    </citation>
    <scope>ACTIVITY REGULATION</scope>
</reference>
<reference key="17">
    <citation type="journal article" date="2005" name="Circ. Res.">
        <title>Phospholipase C epsilon modulates beta-adrenergic receptor-dependent cardiac contraction and inhibits cardiac hypertrophy.</title>
        <authorList>
            <person name="Wang H."/>
            <person name="Oestreich E.A."/>
            <person name="Maekawa N."/>
            <person name="Bullard T.A."/>
            <person name="Vikstrom K.L."/>
            <person name="Dirksen R.T."/>
            <person name="Kelley G.G."/>
            <person name="Blaxall B.C."/>
            <person name="Smrcka A.V."/>
        </authorList>
    </citation>
    <scope>INDUCTION</scope>
</reference>
<reference key="18">
    <citation type="journal article" date="2005" name="Oncogene">
        <title>Signaling properties and expression in normal and tumor tissues of two phospholipase C epsilon splice variants.</title>
        <authorList>
            <person name="Sorli S.C."/>
            <person name="Bunney T.D."/>
            <person name="Sugden P.H."/>
            <person name="Paterson H.F."/>
            <person name="Katan M."/>
        </authorList>
    </citation>
    <scope>TISSUE SPECIFICITY</scope>
    <scope>SUBCELLULAR LOCATION</scope>
</reference>
<reference key="19">
    <citation type="journal article" date="2006" name="J. Cell Sci.">
        <title>The small GTPase R-Ras regulates organization of actin and drives membrane protrusions through the activity of PLCepsilon.</title>
        <authorList>
            <person name="Ada-Nguema A.S."/>
            <person name="Xenias H."/>
            <person name="Sheetz M.P."/>
            <person name="Keely P.J."/>
        </authorList>
    </citation>
    <scope>FUNCTION</scope>
    <scope>INTERACTION WITH RRAS</scope>
    <scope>ACTIVITY REGULATION</scope>
</reference>
<reference key="20">
    <citation type="journal article" date="2017" name="J. Clin. Invest.">
        <title>Advillin acts upstream of phospholipase C 1 in steroid-resistant nephrotic syndrome.</title>
        <authorList>
            <person name="Rao J."/>
            <person name="Ashraf S."/>
            <person name="Tan W."/>
            <person name="van der Ven A.T."/>
            <person name="Gee H.Y."/>
            <person name="Braun D.A."/>
            <person name="Feher K."/>
            <person name="George S.P."/>
            <person name="Esmaeilniakooshkghazi A."/>
            <person name="Choi W.I."/>
            <person name="Jobst-Schwan T."/>
            <person name="Schneider R."/>
            <person name="Schmidt J.M."/>
            <person name="Widmeier E."/>
            <person name="Warejko J.K."/>
            <person name="Hermle T."/>
            <person name="Schapiro D."/>
            <person name="Lovric S."/>
            <person name="Shril S."/>
            <person name="Daga A."/>
            <person name="Nayir A."/>
            <person name="Shenoy M."/>
            <person name="Tse Y."/>
            <person name="Bald M."/>
            <person name="Helmchen U."/>
            <person name="Mir S."/>
            <person name="Berdeli A."/>
            <person name="Kari J.A."/>
            <person name="El Desoky S."/>
            <person name="Soliman N.A."/>
            <person name="Bagga A."/>
            <person name="Mane S."/>
            <person name="Jairajpuri M.A."/>
            <person name="Lifton R.P."/>
            <person name="Khurana S."/>
            <person name="Martins J.C."/>
            <person name="Hildebrandt F."/>
        </authorList>
    </citation>
    <scope>SUBCELLULAR LOCATION</scope>
    <scope>FUNCTION</scope>
    <scope>INTERACTION WITH AVIL</scope>
    <scope>TISSUE SPECIFICITY</scope>
</reference>
<reference key="21">
    <citation type="journal article" date="2006" name="Mol. Cell">
        <title>Structural and mechanistic insights into ras association domains of phospholipase C epsilon.</title>
        <authorList>
            <person name="Bunney T.D."/>
            <person name="Harris R."/>
            <person name="Gandarillas N.L."/>
            <person name="Josephs M.B."/>
            <person name="Roe S.M."/>
            <person name="Sorli S.C."/>
            <person name="Paterson H.F."/>
            <person name="Rodrigues-Lima F."/>
            <person name="Esposito D."/>
            <person name="Ponting C.P."/>
            <person name="Gierschik P."/>
            <person name="Pearl L.H."/>
            <person name="Driscoll P.C."/>
            <person name="Katan M."/>
        </authorList>
    </citation>
    <scope>X-RAY CRYSTALLOGRAPHY (1.9 ANGSTROMS) OF 2131-2246 OF MUTANT LEU-2176 IN COMPLEX WITH HRAS</scope>
    <scope>STRUCTURE BY NMR OF 2006-2114 AND 2131-2246</scope>
    <scope>MUTAGENESIS OF GLN-2140; GLN-2148; ARG-2150; LYS-2171 AND TYR-2174</scope>
</reference>
<reference key="22">
    <citation type="journal article" date="2006" name="Nat. Genet.">
        <title>Positional cloning uncovers mutations in PLCE1 responsible for a nephrotic syndrome variant that may be reversible.</title>
        <authorList>
            <person name="Hinkes B."/>
            <person name="Wiggins R.C."/>
            <person name="Gbadegesin R."/>
            <person name="Vlangos C.N."/>
            <person name="Seelow D."/>
            <person name="Nuernberg G."/>
            <person name="Garg P."/>
            <person name="Verma R."/>
            <person name="Chaib H."/>
            <person name="Hoskins B.E."/>
            <person name="Ashraf S."/>
            <person name="Becker C."/>
            <person name="Hennies H.C."/>
            <person name="Goyal M."/>
            <person name="Wharram B.L."/>
            <person name="Schachter A.D."/>
            <person name="Mudumana S."/>
            <person name="Drummond I."/>
            <person name="Kerjaschki D."/>
            <person name="Waldherr R."/>
            <person name="Dietrich A."/>
            <person name="Ozaltin F."/>
            <person name="Bakkaloglu A."/>
            <person name="Cleper R."/>
            <person name="Basel-Vanagaite L."/>
            <person name="Pohl M."/>
            <person name="Griebel M."/>
            <person name="Tsygin A.N."/>
            <person name="Soylu A."/>
            <person name="Mueller D."/>
            <person name="Sorli C.S."/>
            <person name="Bunney T.D."/>
            <person name="Katan M."/>
            <person name="Liu J."/>
            <person name="Attanasio M."/>
            <person name="O'toole J.F."/>
            <person name="Hasselbacher K."/>
            <person name="Mucha B."/>
            <person name="Otto E.A."/>
            <person name="Airik R."/>
            <person name="Kispert A."/>
            <person name="Kelley G.G."/>
            <person name="Smrcka A.V."/>
            <person name="Gudermann T."/>
            <person name="Holzman L.B."/>
            <person name="Nuernberg P."/>
            <person name="Hildebrandt F."/>
        </authorList>
    </citation>
    <scope>VARIANT NPHS3 LEU-1484</scope>
    <scope>FUNCTION</scope>
    <scope>INTERACTION WITH IQGAP1</scope>
</reference>
<reference key="23">
    <citation type="journal article" date="2013" name="J. Hum. Genet.">
        <title>A molecular genetic analysis of childhood nephrotic syndrome in a cohort of Saudi Arabian families.</title>
        <authorList>
            <person name="Al-Hamed M.H."/>
            <person name="Al-Sabban E."/>
            <person name="Al-Mojalli H."/>
            <person name="Al-Harbi N."/>
            <person name="Faqeih E."/>
            <person name="Al Shaya H."/>
            <person name="Alhasan K."/>
            <person name="Al-Hissi S."/>
            <person name="Rajab M."/>
            <person name="Edwards N."/>
            <person name="Al-Abbad A."/>
            <person name="Al-Hassoun I."/>
            <person name="Sayer J.A."/>
            <person name="Meyer B.F."/>
        </authorList>
    </citation>
    <scope>VARIANT NPHS3 1020-GLN--GLN-2302 DEL</scope>
    <scope>VARIANT ARG-2173</scope>
</reference>
<keyword id="KW-0002">3D-structure</keyword>
<keyword id="KW-0025">Alternative splicing</keyword>
<keyword id="KW-0106">Calcium</keyword>
<keyword id="KW-1003">Cell membrane</keyword>
<keyword id="KW-0966">Cell projection</keyword>
<keyword id="KW-0963">Cytoplasm</keyword>
<keyword id="KW-0225">Disease variant</keyword>
<keyword id="KW-0333">Golgi apparatus</keyword>
<keyword id="KW-0344">Guanine-nucleotide releasing factor</keyword>
<keyword id="KW-0378">Hydrolase</keyword>
<keyword id="KW-0442">Lipid degradation</keyword>
<keyword id="KW-0443">Lipid metabolism</keyword>
<keyword id="KW-0472">Membrane</keyword>
<keyword id="KW-0479">Metal-binding</keyword>
<keyword id="KW-0597">Phosphoprotein</keyword>
<keyword id="KW-1267">Proteomics identification</keyword>
<keyword id="KW-1185">Reference proteome</keyword>
<keyword id="KW-0677">Repeat</keyword>
<keyword id="KW-0807">Transducer</keyword>
<proteinExistence type="evidence at protein level"/>
<evidence type="ECO:0000250" key="1"/>
<evidence type="ECO:0000250" key="2">
    <source>
        <dbReference type="UniProtKB" id="Q8K4S1"/>
    </source>
</evidence>
<evidence type="ECO:0000250" key="3">
    <source>
        <dbReference type="UniProtKB" id="Q99P84"/>
    </source>
</evidence>
<evidence type="ECO:0000255" key="4">
    <source>
        <dbReference type="PROSITE-ProRule" id="PRU00041"/>
    </source>
</evidence>
<evidence type="ECO:0000255" key="5">
    <source>
        <dbReference type="PROSITE-ProRule" id="PRU00166"/>
    </source>
</evidence>
<evidence type="ECO:0000255" key="6">
    <source>
        <dbReference type="PROSITE-ProRule" id="PRU00168"/>
    </source>
</evidence>
<evidence type="ECO:0000255" key="7">
    <source>
        <dbReference type="PROSITE-ProRule" id="PRU00270"/>
    </source>
</evidence>
<evidence type="ECO:0000255" key="8">
    <source>
        <dbReference type="PROSITE-ProRule" id="PRU00271"/>
    </source>
</evidence>
<evidence type="ECO:0000256" key="9">
    <source>
        <dbReference type="SAM" id="MobiDB-lite"/>
    </source>
</evidence>
<evidence type="ECO:0000269" key="10">
    <source>
    </source>
</evidence>
<evidence type="ECO:0000269" key="11">
    <source>
    </source>
</evidence>
<evidence type="ECO:0000269" key="12">
    <source>
    </source>
</evidence>
<evidence type="ECO:0000269" key="13">
    <source>
    </source>
</evidence>
<evidence type="ECO:0000269" key="14">
    <source>
    </source>
</evidence>
<evidence type="ECO:0000269" key="15">
    <source>
    </source>
</evidence>
<evidence type="ECO:0000269" key="16">
    <source>
    </source>
</evidence>
<evidence type="ECO:0000269" key="17">
    <source>
    </source>
</evidence>
<evidence type="ECO:0000269" key="18">
    <source>
    </source>
</evidence>
<evidence type="ECO:0000269" key="19">
    <source>
    </source>
</evidence>
<evidence type="ECO:0000269" key="20">
    <source>
    </source>
</evidence>
<evidence type="ECO:0000269" key="21">
    <source>
    </source>
</evidence>
<evidence type="ECO:0000269" key="22">
    <source>
    </source>
</evidence>
<evidence type="ECO:0000269" key="23">
    <source>
    </source>
</evidence>
<evidence type="ECO:0000269" key="24">
    <source>
    </source>
</evidence>
<evidence type="ECO:0000269" key="25">
    <source>
    </source>
</evidence>
<evidence type="ECO:0000269" key="26">
    <source>
    </source>
</evidence>
<evidence type="ECO:0000269" key="27">
    <source ref="8"/>
</evidence>
<evidence type="ECO:0000303" key="28">
    <source>
    </source>
</evidence>
<evidence type="ECO:0000303" key="29">
    <source>
    </source>
</evidence>
<evidence type="ECO:0000305" key="30"/>
<evidence type="ECO:0000312" key="31">
    <source>
        <dbReference type="HGNC" id="HGNC:17175"/>
    </source>
</evidence>
<evidence type="ECO:0007829" key="32">
    <source>
        <dbReference type="PDB" id="2BYE"/>
    </source>
</evidence>
<evidence type="ECO:0007829" key="33">
    <source>
        <dbReference type="PDB" id="2BYF"/>
    </source>
</evidence>
<evidence type="ECO:0007829" key="34">
    <source>
        <dbReference type="PDB" id="2C5L"/>
    </source>
</evidence>
<protein>
    <recommendedName>
        <fullName evidence="30">1-phosphatidylinositol 4,5-bisphosphate phosphodiesterase epsilon-1</fullName>
        <ecNumber evidence="11 12">3.1.4.11</ecNumber>
    </recommendedName>
    <alternativeName>
        <fullName>Pancreas-enriched phospholipase C</fullName>
    </alternativeName>
    <alternativeName>
        <fullName>Phosphoinositide phospholipase C-epsilon-1</fullName>
    </alternativeName>
    <alternativeName>
        <fullName>Phospholipase C-epsilon-1</fullName>
        <shortName>PLC-epsilon-1</shortName>
    </alternativeName>
</protein>